<feature type="signal peptide" evidence="2">
    <location>
        <begin position="1"/>
        <end position="22"/>
    </location>
</feature>
<feature type="chain" id="PRO_0000367352" description="GDSL esterase/lipase At1g28610">
    <location>
        <begin position="23"/>
        <end position="383"/>
    </location>
</feature>
<feature type="active site" description="Nucleophile" evidence="1">
    <location>
        <position position="38"/>
    </location>
</feature>
<feature type="active site" evidence="1">
    <location>
        <position position="340"/>
    </location>
</feature>
<feature type="active site" evidence="1">
    <location>
        <position position="343"/>
    </location>
</feature>
<feature type="glycosylation site" description="N-linked (GlcNAc...) asparagine" evidence="2">
    <location>
        <position position="134"/>
    </location>
</feature>
<feature type="glycosylation site" description="N-linked (GlcNAc...) asparagine" evidence="2">
    <location>
        <position position="184"/>
    </location>
</feature>
<feature type="glycosylation site" description="N-linked (GlcNAc...) asparagine" evidence="2">
    <location>
        <position position="315"/>
    </location>
</feature>
<feature type="splice variant" id="VSP_036689" description="In isoform 2." evidence="3">
    <original>ELVDMGGRTFLVPGNFPLGCSATYLTLYQTSNKEEYDPLTGCLTWLNDFSEYYNEKLQAELNRLSKLYPHVNIIYGDYFNALLRLYQEPSKFGFMDRPLPACCGLGGPYNFTLSKKCGSVGVKYCSDPSKYVNWDGVHMTEAAYKWIADGLLKGPYTIPSFHWLCLGSKIKSKESLDT</original>
    <variation>VNILDQRVPRTSNFFKKLLCFLFCFCVLVLNVESRSWSIWEEEHS</variation>
    <location>
        <begin position="206"/>
        <end position="383"/>
    </location>
</feature>
<evidence type="ECO:0000250" key="1"/>
<evidence type="ECO:0000255" key="2"/>
<evidence type="ECO:0000303" key="3">
    <source>
    </source>
</evidence>
<evidence type="ECO:0000305" key="4"/>
<accession>Q9SHP6</accession>
<accession>Q94JT8</accession>
<gene>
    <name type="ordered locus">At1g28610</name>
    <name type="ORF">F1K23.16</name>
</gene>
<protein>
    <recommendedName>
        <fullName>GDSL esterase/lipase At1g28610</fullName>
        <ecNumber>3.1.1.-</ecNumber>
    </recommendedName>
    <alternativeName>
        <fullName>Extracellular lipase At1g28610</fullName>
    </alternativeName>
</protein>
<comment type="subcellular location">
    <subcellularLocation>
        <location evidence="4">Secreted</location>
    </subcellularLocation>
</comment>
<comment type="alternative products">
    <event type="alternative splicing"/>
    <isoform>
        <id>Q9SHP6-1</id>
        <name>1</name>
        <sequence type="displayed"/>
    </isoform>
    <isoform>
        <id>Q9SHP6-2</id>
        <name>2</name>
        <sequence type="described" ref="VSP_036689"/>
    </isoform>
</comment>
<comment type="similarity">
    <text evidence="4">Belongs to the 'GDSL' lipolytic enzyme family.</text>
</comment>
<comment type="sequence caution" evidence="4">
    <conflict type="miscellaneous discrepancy">
        <sequence resource="EMBL" id="BX814880"/>
    </conflict>
    <text>Sequencing errors.</text>
</comment>
<keyword id="KW-0025">Alternative splicing</keyword>
<keyword id="KW-0325">Glycoprotein</keyword>
<keyword id="KW-0378">Hydrolase</keyword>
<keyword id="KW-0442">Lipid degradation</keyword>
<keyword id="KW-0443">Lipid metabolism</keyword>
<keyword id="KW-1185">Reference proteome</keyword>
<keyword id="KW-0964">Secreted</keyword>
<keyword id="KW-0732">Signal</keyword>
<name>GDL10_ARATH</name>
<organism>
    <name type="scientific">Arabidopsis thaliana</name>
    <name type="common">Mouse-ear cress</name>
    <dbReference type="NCBI Taxonomy" id="3702"/>
    <lineage>
        <taxon>Eukaryota</taxon>
        <taxon>Viridiplantae</taxon>
        <taxon>Streptophyta</taxon>
        <taxon>Embryophyta</taxon>
        <taxon>Tracheophyta</taxon>
        <taxon>Spermatophyta</taxon>
        <taxon>Magnoliopsida</taxon>
        <taxon>eudicotyledons</taxon>
        <taxon>Gunneridae</taxon>
        <taxon>Pentapetalae</taxon>
        <taxon>rosids</taxon>
        <taxon>malvids</taxon>
        <taxon>Brassicales</taxon>
        <taxon>Brassicaceae</taxon>
        <taxon>Camelineae</taxon>
        <taxon>Arabidopsis</taxon>
    </lineage>
</organism>
<proteinExistence type="evidence at transcript level"/>
<reference key="1">
    <citation type="journal article" date="2000" name="Nature">
        <title>Sequence and analysis of chromosome 1 of the plant Arabidopsis thaliana.</title>
        <authorList>
            <person name="Theologis A."/>
            <person name="Ecker J.R."/>
            <person name="Palm C.J."/>
            <person name="Federspiel N.A."/>
            <person name="Kaul S."/>
            <person name="White O."/>
            <person name="Alonso J."/>
            <person name="Altafi H."/>
            <person name="Araujo R."/>
            <person name="Bowman C.L."/>
            <person name="Brooks S.Y."/>
            <person name="Buehler E."/>
            <person name="Chan A."/>
            <person name="Chao Q."/>
            <person name="Chen H."/>
            <person name="Cheuk R.F."/>
            <person name="Chin C.W."/>
            <person name="Chung M.K."/>
            <person name="Conn L."/>
            <person name="Conway A.B."/>
            <person name="Conway A.R."/>
            <person name="Creasy T.H."/>
            <person name="Dewar K."/>
            <person name="Dunn P."/>
            <person name="Etgu P."/>
            <person name="Feldblyum T.V."/>
            <person name="Feng J.-D."/>
            <person name="Fong B."/>
            <person name="Fujii C.Y."/>
            <person name="Gill J.E."/>
            <person name="Goldsmith A.D."/>
            <person name="Haas B."/>
            <person name="Hansen N.F."/>
            <person name="Hughes B."/>
            <person name="Huizar L."/>
            <person name="Hunter J.L."/>
            <person name="Jenkins J."/>
            <person name="Johnson-Hopson C."/>
            <person name="Khan S."/>
            <person name="Khaykin E."/>
            <person name="Kim C.J."/>
            <person name="Koo H.L."/>
            <person name="Kremenetskaia I."/>
            <person name="Kurtz D.B."/>
            <person name="Kwan A."/>
            <person name="Lam B."/>
            <person name="Langin-Hooper S."/>
            <person name="Lee A."/>
            <person name="Lee J.M."/>
            <person name="Lenz C.A."/>
            <person name="Li J.H."/>
            <person name="Li Y.-P."/>
            <person name="Lin X."/>
            <person name="Liu S.X."/>
            <person name="Liu Z.A."/>
            <person name="Luros J.S."/>
            <person name="Maiti R."/>
            <person name="Marziali A."/>
            <person name="Militscher J."/>
            <person name="Miranda M."/>
            <person name="Nguyen M."/>
            <person name="Nierman W.C."/>
            <person name="Osborne B.I."/>
            <person name="Pai G."/>
            <person name="Peterson J."/>
            <person name="Pham P.K."/>
            <person name="Rizzo M."/>
            <person name="Rooney T."/>
            <person name="Rowley D."/>
            <person name="Sakano H."/>
            <person name="Salzberg S.L."/>
            <person name="Schwartz J.R."/>
            <person name="Shinn P."/>
            <person name="Southwick A.M."/>
            <person name="Sun H."/>
            <person name="Tallon L.J."/>
            <person name="Tambunga G."/>
            <person name="Toriumi M.J."/>
            <person name="Town C.D."/>
            <person name="Utterback T."/>
            <person name="Van Aken S."/>
            <person name="Vaysberg M."/>
            <person name="Vysotskaia V.S."/>
            <person name="Walker M."/>
            <person name="Wu D."/>
            <person name="Yu G."/>
            <person name="Fraser C.M."/>
            <person name="Venter J.C."/>
            <person name="Davis R.W."/>
        </authorList>
    </citation>
    <scope>NUCLEOTIDE SEQUENCE [LARGE SCALE GENOMIC DNA]</scope>
    <source>
        <strain>cv. Columbia</strain>
    </source>
</reference>
<reference key="2">
    <citation type="journal article" date="2017" name="Plant J.">
        <title>Araport11: a complete reannotation of the Arabidopsis thaliana reference genome.</title>
        <authorList>
            <person name="Cheng C.Y."/>
            <person name="Krishnakumar V."/>
            <person name="Chan A.P."/>
            <person name="Thibaud-Nissen F."/>
            <person name="Schobel S."/>
            <person name="Town C.D."/>
        </authorList>
    </citation>
    <scope>GENOME REANNOTATION</scope>
    <source>
        <strain>cv. Columbia</strain>
    </source>
</reference>
<reference key="3">
    <citation type="journal article" date="2003" name="Science">
        <title>Empirical analysis of transcriptional activity in the Arabidopsis genome.</title>
        <authorList>
            <person name="Yamada K."/>
            <person name="Lim J."/>
            <person name="Dale J.M."/>
            <person name="Chen H."/>
            <person name="Shinn P."/>
            <person name="Palm C.J."/>
            <person name="Southwick A.M."/>
            <person name="Wu H.C."/>
            <person name="Kim C.J."/>
            <person name="Nguyen M."/>
            <person name="Pham P.K."/>
            <person name="Cheuk R.F."/>
            <person name="Karlin-Newmann G."/>
            <person name="Liu S.X."/>
            <person name="Lam B."/>
            <person name="Sakano H."/>
            <person name="Wu T."/>
            <person name="Yu G."/>
            <person name="Miranda M."/>
            <person name="Quach H.L."/>
            <person name="Tripp M."/>
            <person name="Chang C.H."/>
            <person name="Lee J.M."/>
            <person name="Toriumi M.J."/>
            <person name="Chan M.M."/>
            <person name="Tang C.C."/>
            <person name="Onodera C.S."/>
            <person name="Deng J.M."/>
            <person name="Akiyama K."/>
            <person name="Ansari Y."/>
            <person name="Arakawa T."/>
            <person name="Banh J."/>
            <person name="Banno F."/>
            <person name="Bowser L."/>
            <person name="Brooks S.Y."/>
            <person name="Carninci P."/>
            <person name="Chao Q."/>
            <person name="Choy N."/>
            <person name="Enju A."/>
            <person name="Goldsmith A.D."/>
            <person name="Gurjal M."/>
            <person name="Hansen N.F."/>
            <person name="Hayashizaki Y."/>
            <person name="Johnson-Hopson C."/>
            <person name="Hsuan V.W."/>
            <person name="Iida K."/>
            <person name="Karnes M."/>
            <person name="Khan S."/>
            <person name="Koesema E."/>
            <person name="Ishida J."/>
            <person name="Jiang P.X."/>
            <person name="Jones T."/>
            <person name="Kawai J."/>
            <person name="Kamiya A."/>
            <person name="Meyers C."/>
            <person name="Nakajima M."/>
            <person name="Narusaka M."/>
            <person name="Seki M."/>
            <person name="Sakurai T."/>
            <person name="Satou M."/>
            <person name="Tamse R."/>
            <person name="Vaysberg M."/>
            <person name="Wallender E.K."/>
            <person name="Wong C."/>
            <person name="Yamamura Y."/>
            <person name="Yuan S."/>
            <person name="Shinozaki K."/>
            <person name="Davis R.W."/>
            <person name="Theologis A."/>
            <person name="Ecker J.R."/>
        </authorList>
    </citation>
    <scope>NUCLEOTIDE SEQUENCE [LARGE SCALE MRNA] (ISOFORM 2)</scope>
    <source>
        <strain>cv. Columbia</strain>
    </source>
</reference>
<reference key="4">
    <citation type="journal article" date="2004" name="Genome Res.">
        <title>Whole genome sequence comparisons and 'full-length' cDNA sequences: a combined approach to evaluate and improve Arabidopsis genome annotation.</title>
        <authorList>
            <person name="Castelli V."/>
            <person name="Aury J.-M."/>
            <person name="Jaillon O."/>
            <person name="Wincker P."/>
            <person name="Clepet C."/>
            <person name="Menard M."/>
            <person name="Cruaud C."/>
            <person name="Quetier F."/>
            <person name="Scarpelli C."/>
            <person name="Schaechter V."/>
            <person name="Temple G."/>
            <person name="Caboche M."/>
            <person name="Weissenbach J."/>
            <person name="Salanoubat M."/>
        </authorList>
    </citation>
    <scope>NUCLEOTIDE SEQUENCE [LARGE SCALE MRNA] (ISOFORM 1)</scope>
    <source>
        <strain>cv. Columbia</strain>
    </source>
</reference>
<reference key="5">
    <citation type="journal article" date="2004" name="Prog. Lipid Res.">
        <title>GDSL family of serine esterases/lipases.</title>
        <authorList>
            <person name="Akoh C.C."/>
            <person name="Lee G.-C."/>
            <person name="Liaw Y.-C."/>
            <person name="Huang T.-H."/>
            <person name="Shaw J.-F."/>
        </authorList>
    </citation>
    <scope>REVIEW</scope>
</reference>
<reference key="6">
    <citation type="journal article" date="2008" name="Pak. J. Biol. Sci.">
        <title>Sequence analysis of GDSL lipase gene family in Arabidopsis thaliana.</title>
        <authorList>
            <person name="Ling H."/>
        </authorList>
    </citation>
    <scope>GENE FAMILY</scope>
</reference>
<dbReference type="EC" id="3.1.1.-"/>
<dbReference type="EMBL" id="AC007508">
    <property type="protein sequence ID" value="AAG22835.1"/>
    <property type="molecule type" value="Genomic_DNA"/>
</dbReference>
<dbReference type="EMBL" id="CP002684">
    <property type="protein sequence ID" value="AEE31001.1"/>
    <property type="molecule type" value="Genomic_DNA"/>
</dbReference>
<dbReference type="EMBL" id="CP002684">
    <property type="protein sequence ID" value="AEE31002.1"/>
    <property type="molecule type" value="Genomic_DNA"/>
</dbReference>
<dbReference type="EMBL" id="AF372948">
    <property type="protein sequence ID" value="AAK50088.1"/>
    <property type="molecule type" value="mRNA"/>
</dbReference>
<dbReference type="EMBL" id="AY133590">
    <property type="protein sequence ID" value="AAM91420.1"/>
    <property type="molecule type" value="mRNA"/>
</dbReference>
<dbReference type="EMBL" id="BX814880">
    <property type="status" value="NOT_ANNOTATED_CDS"/>
    <property type="molecule type" value="mRNA"/>
</dbReference>
<dbReference type="PIR" id="F86411">
    <property type="entry name" value="F86411"/>
</dbReference>
<dbReference type="RefSeq" id="NP_564313.1">
    <molecule id="Q9SHP6-2"/>
    <property type="nucleotide sequence ID" value="NM_102629.2"/>
</dbReference>
<dbReference type="RefSeq" id="NP_973932.1">
    <molecule id="Q9SHP6-1"/>
    <property type="nucleotide sequence ID" value="NM_202203.2"/>
</dbReference>
<dbReference type="SMR" id="Q9SHP6"/>
<dbReference type="BioGRID" id="24996">
    <property type="interactions" value="1"/>
</dbReference>
<dbReference type="FunCoup" id="Q9SHP6">
    <property type="interactions" value="121"/>
</dbReference>
<dbReference type="IntAct" id="Q9SHP6">
    <property type="interactions" value="1"/>
</dbReference>
<dbReference type="STRING" id="3702.Q9SHP6"/>
<dbReference type="GlyGen" id="Q9SHP6">
    <property type="glycosylation" value="3 sites"/>
</dbReference>
<dbReference type="PaxDb" id="3702-AT1G28610.2"/>
<dbReference type="ProteomicsDB" id="224747">
    <molecule id="Q9SHP6-1"/>
</dbReference>
<dbReference type="EnsemblPlants" id="AT1G28610.1">
    <molecule id="Q9SHP6-2"/>
    <property type="protein sequence ID" value="AT1G28610.1"/>
    <property type="gene ID" value="AT1G28610"/>
</dbReference>
<dbReference type="EnsemblPlants" id="AT1G28610.2">
    <molecule id="Q9SHP6-1"/>
    <property type="protein sequence ID" value="AT1G28610.2"/>
    <property type="gene ID" value="AT1G28610"/>
</dbReference>
<dbReference type="GeneID" id="839761"/>
<dbReference type="Gramene" id="AT1G28610.1">
    <molecule id="Q9SHP6-2"/>
    <property type="protein sequence ID" value="AT1G28610.1"/>
    <property type="gene ID" value="AT1G28610"/>
</dbReference>
<dbReference type="Gramene" id="AT1G28610.2">
    <molecule id="Q9SHP6-1"/>
    <property type="protein sequence ID" value="AT1G28610.2"/>
    <property type="gene ID" value="AT1G28610"/>
</dbReference>
<dbReference type="KEGG" id="ath:AT1G28610"/>
<dbReference type="Araport" id="AT1G28610"/>
<dbReference type="TAIR" id="AT1G28610"/>
<dbReference type="eggNOG" id="ENOG502QSMM">
    <property type="taxonomic scope" value="Eukaryota"/>
</dbReference>
<dbReference type="HOGENOM" id="CLU_015101_2_1_1"/>
<dbReference type="InParanoid" id="Q9SHP6"/>
<dbReference type="OMA" id="PSILCGH"/>
<dbReference type="OrthoDB" id="1600564at2759"/>
<dbReference type="PhylomeDB" id="Q9SHP6"/>
<dbReference type="BioCyc" id="ARA:AT1G28610-MONOMER"/>
<dbReference type="PRO" id="PR:Q9SHP6"/>
<dbReference type="Proteomes" id="UP000006548">
    <property type="component" value="Chromosome 1"/>
</dbReference>
<dbReference type="ExpressionAtlas" id="Q9SHP6">
    <property type="expression patterns" value="baseline and differential"/>
</dbReference>
<dbReference type="GO" id="GO:0005576">
    <property type="term" value="C:extracellular region"/>
    <property type="evidence" value="ECO:0007669"/>
    <property type="project" value="UniProtKB-SubCell"/>
</dbReference>
<dbReference type="GO" id="GO:0016788">
    <property type="term" value="F:hydrolase activity, acting on ester bonds"/>
    <property type="evidence" value="ECO:0007669"/>
    <property type="project" value="InterPro"/>
</dbReference>
<dbReference type="GO" id="GO:0016042">
    <property type="term" value="P:lipid catabolic process"/>
    <property type="evidence" value="ECO:0007669"/>
    <property type="project" value="UniProtKB-KW"/>
</dbReference>
<dbReference type="CDD" id="cd01837">
    <property type="entry name" value="SGNH_plant_lipase_like"/>
    <property type="match status" value="1"/>
</dbReference>
<dbReference type="Gene3D" id="3.40.50.1110">
    <property type="entry name" value="SGNH hydrolase"/>
    <property type="match status" value="1"/>
</dbReference>
<dbReference type="InterPro" id="IPR001087">
    <property type="entry name" value="GDSL"/>
</dbReference>
<dbReference type="InterPro" id="IPR036514">
    <property type="entry name" value="SGNH_hydro_sf"/>
</dbReference>
<dbReference type="InterPro" id="IPR035669">
    <property type="entry name" value="SGNH_plant_lipase-like"/>
</dbReference>
<dbReference type="PANTHER" id="PTHR22835:SF683">
    <property type="entry name" value="OS05G0506800 PROTEIN"/>
    <property type="match status" value="1"/>
</dbReference>
<dbReference type="PANTHER" id="PTHR22835">
    <property type="entry name" value="ZINC FINGER FYVE DOMAIN CONTAINING PROTEIN"/>
    <property type="match status" value="1"/>
</dbReference>
<dbReference type="Pfam" id="PF00657">
    <property type="entry name" value="Lipase_GDSL"/>
    <property type="match status" value="1"/>
</dbReference>
<dbReference type="SUPFAM" id="SSF52266">
    <property type="entry name" value="SGNH hydrolase"/>
    <property type="match status" value="1"/>
</dbReference>
<sequence length="383" mass="42427">MASLDSLVSFFLSTLFVTIVSSQTQCRNLESIISFGDSITDTGNLVGLSDRNHLPVTAFLPYGETFFHHPTGRSCNGRIIIDFIAEFLGLPHVPPFYGSKNGNFEKGVNFAVAGATALETSILEKRGIYYPHSNISLGIQLKTFKESLPNLCGSPTDCRDMIGNAFIIMGEIGGNDFNFAFFVNKTSEVKELVPLVITKISSAIVELVDMGGRTFLVPGNFPLGCSATYLTLYQTSNKEEYDPLTGCLTWLNDFSEYYNEKLQAELNRLSKLYPHVNIIYGDYFNALLRLYQEPSKFGFMDRPLPACCGLGGPYNFTLSKKCGSVGVKYCSDPSKYVNWDGVHMTEAAYKWIADGLLKGPYTIPSFHWLCLGSKIKSKESLDT</sequence>